<gene>
    <name evidence="1" type="primary">tolB</name>
    <name type="ordered locus">NT01EI_2857</name>
</gene>
<protein>
    <recommendedName>
        <fullName evidence="1">Tol-Pal system protein TolB</fullName>
    </recommendedName>
</protein>
<comment type="function">
    <text evidence="1">Part of the Tol-Pal system, which plays a role in outer membrane invagination during cell division and is important for maintaining outer membrane integrity. TolB occupies a key intermediary position in the Tol-Pal system because it communicates directly with both membrane-embedded components, Pal in the outer membrane and TolA in the inner membrane.</text>
</comment>
<comment type="subunit">
    <text evidence="1">The Tol-Pal system is composed of five core proteins: the inner membrane proteins TolA, TolQ and TolR, the periplasmic protein TolB and the outer membrane protein Pal. They form a network linking the inner and outer membranes and the peptidoglycan layer.</text>
</comment>
<comment type="subcellular location">
    <subcellularLocation>
        <location evidence="1">Periplasm</location>
    </subcellularLocation>
</comment>
<comment type="similarity">
    <text evidence="1">Belongs to the TolB family.</text>
</comment>
<feature type="signal peptide" evidence="1">
    <location>
        <begin position="1"/>
        <end position="21"/>
    </location>
</feature>
<feature type="chain" id="PRO_1000212508" description="Tol-Pal system protein TolB" evidence="1">
    <location>
        <begin position="22"/>
        <end position="430"/>
    </location>
</feature>
<dbReference type="EMBL" id="CP001600">
    <property type="protein sequence ID" value="ACR70018.1"/>
    <property type="molecule type" value="Genomic_DNA"/>
</dbReference>
<dbReference type="RefSeq" id="WP_015872114.1">
    <property type="nucleotide sequence ID" value="NZ_CP169062.1"/>
</dbReference>
<dbReference type="SMR" id="C5BEL8"/>
<dbReference type="STRING" id="67780.B6E78_06210"/>
<dbReference type="GeneID" id="69539743"/>
<dbReference type="KEGG" id="eic:NT01EI_2857"/>
<dbReference type="PATRIC" id="fig|634503.3.peg.2555"/>
<dbReference type="HOGENOM" id="CLU_047123_0_0_6"/>
<dbReference type="OrthoDB" id="9802240at2"/>
<dbReference type="Proteomes" id="UP000001485">
    <property type="component" value="Chromosome"/>
</dbReference>
<dbReference type="GO" id="GO:0042597">
    <property type="term" value="C:periplasmic space"/>
    <property type="evidence" value="ECO:0007669"/>
    <property type="project" value="UniProtKB-SubCell"/>
</dbReference>
<dbReference type="GO" id="GO:0051301">
    <property type="term" value="P:cell division"/>
    <property type="evidence" value="ECO:0007669"/>
    <property type="project" value="UniProtKB-UniRule"/>
</dbReference>
<dbReference type="GO" id="GO:0017038">
    <property type="term" value="P:protein import"/>
    <property type="evidence" value="ECO:0007669"/>
    <property type="project" value="InterPro"/>
</dbReference>
<dbReference type="FunFam" id="2.120.10.30:FF:000022">
    <property type="entry name" value="Tol-Pal system protein TolB"/>
    <property type="match status" value="1"/>
</dbReference>
<dbReference type="Gene3D" id="2.120.10.30">
    <property type="entry name" value="TolB, C-terminal domain"/>
    <property type="match status" value="1"/>
</dbReference>
<dbReference type="Gene3D" id="3.40.50.10070">
    <property type="entry name" value="TolB, N-terminal domain"/>
    <property type="match status" value="1"/>
</dbReference>
<dbReference type="HAMAP" id="MF_00671">
    <property type="entry name" value="TolB"/>
    <property type="match status" value="1"/>
</dbReference>
<dbReference type="InterPro" id="IPR011042">
    <property type="entry name" value="6-blade_b-propeller_TolB-like"/>
</dbReference>
<dbReference type="InterPro" id="IPR011659">
    <property type="entry name" value="PD40"/>
</dbReference>
<dbReference type="InterPro" id="IPR014167">
    <property type="entry name" value="Tol-Pal_TolB"/>
</dbReference>
<dbReference type="InterPro" id="IPR007195">
    <property type="entry name" value="TolB_N"/>
</dbReference>
<dbReference type="NCBIfam" id="TIGR02800">
    <property type="entry name" value="propeller_TolB"/>
    <property type="match status" value="1"/>
</dbReference>
<dbReference type="PANTHER" id="PTHR36842:SF1">
    <property type="entry name" value="PROTEIN TOLB"/>
    <property type="match status" value="1"/>
</dbReference>
<dbReference type="PANTHER" id="PTHR36842">
    <property type="entry name" value="PROTEIN TOLB HOMOLOG"/>
    <property type="match status" value="1"/>
</dbReference>
<dbReference type="Pfam" id="PF07676">
    <property type="entry name" value="PD40"/>
    <property type="match status" value="4"/>
</dbReference>
<dbReference type="Pfam" id="PF04052">
    <property type="entry name" value="TolB_N"/>
    <property type="match status" value="1"/>
</dbReference>
<dbReference type="SUPFAM" id="SSF52964">
    <property type="entry name" value="TolB, N-terminal domain"/>
    <property type="match status" value="1"/>
</dbReference>
<dbReference type="SUPFAM" id="SSF69304">
    <property type="entry name" value="Tricorn protease N-terminal domain"/>
    <property type="match status" value="1"/>
</dbReference>
<proteinExistence type="inferred from homology"/>
<organism>
    <name type="scientific">Edwardsiella ictaluri (strain 93-146)</name>
    <dbReference type="NCBI Taxonomy" id="634503"/>
    <lineage>
        <taxon>Bacteria</taxon>
        <taxon>Pseudomonadati</taxon>
        <taxon>Pseudomonadota</taxon>
        <taxon>Gammaproteobacteria</taxon>
        <taxon>Enterobacterales</taxon>
        <taxon>Hafniaceae</taxon>
        <taxon>Edwardsiella</taxon>
    </lineage>
</organism>
<sequence length="430" mass="46048">MKQAFRLMVGLLVLWASVLHAEVRIVITQGVDSARPIGVVPFKWMGPGTAPENIGGIIAADLRNSGKFNPIDASRMPQQPSAAAEVSPAAWTALGIDAVVVGQVQPGADGSYLVSYQLVDTSGNPGSVLVQNQYKVTGQWLRYAAHTASDEVFEKLTGIKGAFRTRIAYVVQTNGGQFPYELRVADYDGYNQFVVHRSAEPLMSPAWSPDGSKLAYVTFESGRSALVIQTLSNGAIRQVASFPRHNGSPAFSPDGSKLAFALSKTGSLNLYVMDLASGAIRQVTDGRSNNTEPTWFPDSQNLAFTSDQAGRPQIYKMNINGGVAQRLTWEGSQNQDAEVSPDGKFLVMVSSSAGAQHIAKLDLGTNATQVLTDTFLDETPSIAPNGTMVIYSSTQGLGSVLQLVSIDGRFKARLPATDGQVKFPAWSPYL</sequence>
<evidence type="ECO:0000255" key="1">
    <source>
        <dbReference type="HAMAP-Rule" id="MF_00671"/>
    </source>
</evidence>
<reference key="1">
    <citation type="submission" date="2009-03" db="EMBL/GenBank/DDBJ databases">
        <title>Complete genome sequence of Edwardsiella ictaluri 93-146.</title>
        <authorList>
            <person name="Williams M.L."/>
            <person name="Gillaspy A.F."/>
            <person name="Dyer D.W."/>
            <person name="Thune R.L."/>
            <person name="Waldbieser G.C."/>
            <person name="Schuster S.C."/>
            <person name="Gipson J."/>
            <person name="Zaitshik J."/>
            <person name="Landry C."/>
            <person name="Lawrence M.L."/>
        </authorList>
    </citation>
    <scope>NUCLEOTIDE SEQUENCE [LARGE SCALE GENOMIC DNA]</scope>
    <source>
        <strain>93-146</strain>
    </source>
</reference>
<accession>C5BEL8</accession>
<name>TOLB_EDWI9</name>
<keyword id="KW-0131">Cell cycle</keyword>
<keyword id="KW-0132">Cell division</keyword>
<keyword id="KW-0574">Periplasm</keyword>
<keyword id="KW-0732">Signal</keyword>